<dbReference type="EC" id="2.3.1.234" evidence="1"/>
<dbReference type="EMBL" id="CP000413">
    <property type="protein sequence ID" value="ABJ59786.1"/>
    <property type="molecule type" value="Genomic_DNA"/>
</dbReference>
<dbReference type="RefSeq" id="WP_003656583.1">
    <property type="nucleotide sequence ID" value="NZ_WBMG01000001.1"/>
</dbReference>
<dbReference type="SMR" id="Q045T6"/>
<dbReference type="GeneID" id="29639316"/>
<dbReference type="KEGG" id="lga:LGAS_0381"/>
<dbReference type="HOGENOM" id="CLU_023208_0_2_9"/>
<dbReference type="BioCyc" id="LGAS324831:G1G6Y-380-MONOMER"/>
<dbReference type="Proteomes" id="UP000000664">
    <property type="component" value="Chromosome"/>
</dbReference>
<dbReference type="GO" id="GO:0005737">
    <property type="term" value="C:cytoplasm"/>
    <property type="evidence" value="ECO:0007669"/>
    <property type="project" value="UniProtKB-SubCell"/>
</dbReference>
<dbReference type="GO" id="GO:0005506">
    <property type="term" value="F:iron ion binding"/>
    <property type="evidence" value="ECO:0007669"/>
    <property type="project" value="UniProtKB-UniRule"/>
</dbReference>
<dbReference type="GO" id="GO:0061711">
    <property type="term" value="F:N(6)-L-threonylcarbamoyladenine synthase activity"/>
    <property type="evidence" value="ECO:0007669"/>
    <property type="project" value="UniProtKB-EC"/>
</dbReference>
<dbReference type="GO" id="GO:0002949">
    <property type="term" value="P:tRNA threonylcarbamoyladenosine modification"/>
    <property type="evidence" value="ECO:0007669"/>
    <property type="project" value="UniProtKB-UniRule"/>
</dbReference>
<dbReference type="CDD" id="cd24133">
    <property type="entry name" value="ASKHA_NBD_TsaD_bac"/>
    <property type="match status" value="1"/>
</dbReference>
<dbReference type="FunFam" id="3.30.420.40:FF:000040">
    <property type="entry name" value="tRNA N6-adenosine threonylcarbamoyltransferase"/>
    <property type="match status" value="1"/>
</dbReference>
<dbReference type="Gene3D" id="3.30.420.40">
    <property type="match status" value="2"/>
</dbReference>
<dbReference type="HAMAP" id="MF_01445">
    <property type="entry name" value="TsaD"/>
    <property type="match status" value="1"/>
</dbReference>
<dbReference type="InterPro" id="IPR043129">
    <property type="entry name" value="ATPase_NBD"/>
</dbReference>
<dbReference type="InterPro" id="IPR000905">
    <property type="entry name" value="Gcp-like_dom"/>
</dbReference>
<dbReference type="InterPro" id="IPR017861">
    <property type="entry name" value="KAE1/TsaD"/>
</dbReference>
<dbReference type="InterPro" id="IPR022450">
    <property type="entry name" value="TsaD"/>
</dbReference>
<dbReference type="NCBIfam" id="TIGR00329">
    <property type="entry name" value="gcp_kae1"/>
    <property type="match status" value="1"/>
</dbReference>
<dbReference type="NCBIfam" id="TIGR03723">
    <property type="entry name" value="T6A_TsaD_YgjD"/>
    <property type="match status" value="1"/>
</dbReference>
<dbReference type="PANTHER" id="PTHR11735">
    <property type="entry name" value="TRNA N6-ADENOSINE THREONYLCARBAMOYLTRANSFERASE"/>
    <property type="match status" value="1"/>
</dbReference>
<dbReference type="PANTHER" id="PTHR11735:SF6">
    <property type="entry name" value="TRNA N6-ADENOSINE THREONYLCARBAMOYLTRANSFERASE, MITOCHONDRIAL"/>
    <property type="match status" value="1"/>
</dbReference>
<dbReference type="Pfam" id="PF00814">
    <property type="entry name" value="TsaD"/>
    <property type="match status" value="1"/>
</dbReference>
<dbReference type="PRINTS" id="PR00789">
    <property type="entry name" value="OSIALOPTASE"/>
</dbReference>
<dbReference type="SUPFAM" id="SSF53067">
    <property type="entry name" value="Actin-like ATPase domain"/>
    <property type="match status" value="2"/>
</dbReference>
<proteinExistence type="inferred from homology"/>
<keyword id="KW-0012">Acyltransferase</keyword>
<keyword id="KW-0963">Cytoplasm</keyword>
<keyword id="KW-0408">Iron</keyword>
<keyword id="KW-0479">Metal-binding</keyword>
<keyword id="KW-0808">Transferase</keyword>
<keyword id="KW-0819">tRNA processing</keyword>
<name>TSAD_LACGA</name>
<reference key="1">
    <citation type="journal article" date="2006" name="Proc. Natl. Acad. Sci. U.S.A.">
        <title>Comparative genomics of the lactic acid bacteria.</title>
        <authorList>
            <person name="Makarova K.S."/>
            <person name="Slesarev A."/>
            <person name="Wolf Y.I."/>
            <person name="Sorokin A."/>
            <person name="Mirkin B."/>
            <person name="Koonin E.V."/>
            <person name="Pavlov A."/>
            <person name="Pavlova N."/>
            <person name="Karamychev V."/>
            <person name="Polouchine N."/>
            <person name="Shakhova V."/>
            <person name="Grigoriev I."/>
            <person name="Lou Y."/>
            <person name="Rohksar D."/>
            <person name="Lucas S."/>
            <person name="Huang K."/>
            <person name="Goodstein D.M."/>
            <person name="Hawkins T."/>
            <person name="Plengvidhya V."/>
            <person name="Welker D."/>
            <person name="Hughes J."/>
            <person name="Goh Y."/>
            <person name="Benson A."/>
            <person name="Baldwin K."/>
            <person name="Lee J.-H."/>
            <person name="Diaz-Muniz I."/>
            <person name="Dosti B."/>
            <person name="Smeianov V."/>
            <person name="Wechter W."/>
            <person name="Barabote R."/>
            <person name="Lorca G."/>
            <person name="Altermann E."/>
            <person name="Barrangou R."/>
            <person name="Ganesan B."/>
            <person name="Xie Y."/>
            <person name="Rawsthorne H."/>
            <person name="Tamir D."/>
            <person name="Parker C."/>
            <person name="Breidt F."/>
            <person name="Broadbent J.R."/>
            <person name="Hutkins R."/>
            <person name="O'Sullivan D."/>
            <person name="Steele J."/>
            <person name="Unlu G."/>
            <person name="Saier M.H. Jr."/>
            <person name="Klaenhammer T."/>
            <person name="Richardson P."/>
            <person name="Kozyavkin S."/>
            <person name="Weimer B.C."/>
            <person name="Mills D.A."/>
        </authorList>
    </citation>
    <scope>NUCLEOTIDE SEQUENCE [LARGE SCALE GENOMIC DNA]</scope>
    <source>
        <strain>ATCC 33323 / DSM 20243 / BCRC 14619 / CIP 102991 / JCM 1131 / KCTC 3163 / NCIMB 11718 / NCTC 13722 / AM63</strain>
    </source>
</reference>
<comment type="function">
    <text evidence="1">Required for the formation of a threonylcarbamoyl group on adenosine at position 37 (t(6)A37) in tRNAs that read codons beginning with adenine. Is involved in the transfer of the threonylcarbamoyl moiety of threonylcarbamoyl-AMP (TC-AMP) to the N6 group of A37, together with TsaE and TsaB. TsaD likely plays a direct catalytic role in this reaction.</text>
</comment>
<comment type="catalytic activity">
    <reaction evidence="1">
        <text>L-threonylcarbamoyladenylate + adenosine(37) in tRNA = N(6)-L-threonylcarbamoyladenosine(37) in tRNA + AMP + H(+)</text>
        <dbReference type="Rhea" id="RHEA:37059"/>
        <dbReference type="Rhea" id="RHEA-COMP:10162"/>
        <dbReference type="Rhea" id="RHEA-COMP:10163"/>
        <dbReference type="ChEBI" id="CHEBI:15378"/>
        <dbReference type="ChEBI" id="CHEBI:73682"/>
        <dbReference type="ChEBI" id="CHEBI:74411"/>
        <dbReference type="ChEBI" id="CHEBI:74418"/>
        <dbReference type="ChEBI" id="CHEBI:456215"/>
        <dbReference type="EC" id="2.3.1.234"/>
    </reaction>
</comment>
<comment type="cofactor">
    <cofactor evidence="1">
        <name>Fe(2+)</name>
        <dbReference type="ChEBI" id="CHEBI:29033"/>
    </cofactor>
    <text evidence="1">Binds 1 Fe(2+) ion per subunit.</text>
</comment>
<comment type="subcellular location">
    <subcellularLocation>
        <location evidence="1">Cytoplasm</location>
    </subcellularLocation>
</comment>
<comment type="similarity">
    <text evidence="1">Belongs to the KAE1 / TsaD family.</text>
</comment>
<accession>Q045T6</accession>
<sequence>MTKKDIRILAFESSCDETSTAVIKNGREIESLIVATQIKSHQRFGGVVPEVASRHHIEVITQITKEALAEANATWDDIDAIAVTYGPGLVGALLIGVSAAKAASMATGIPLIGVDHIMGHIMAAQLKDEIEYPALALQVSGGHTEIVLMKDPIHFEIVGDTRDDAAGEAYDKIGRVLGVNYPAGKTIDEWAHKGKDTFHFPRAMMEDDDYDFSLSGLKSAFINTCHHADQIHEKLDKYDLAASFQASVVDVLSHKTIRAIKEYKPKTFILGGGVAANHGLRDRLAEEIEKLPADIKPKVILPDLKLCGDNAAMIGAAAYNLYKAGKFSDENLNADPSLELPYADSMLK</sequence>
<evidence type="ECO:0000255" key="1">
    <source>
        <dbReference type="HAMAP-Rule" id="MF_01445"/>
    </source>
</evidence>
<feature type="chain" id="PRO_0000303394" description="tRNA N6-adenosine threonylcarbamoyltransferase">
    <location>
        <begin position="1"/>
        <end position="348"/>
    </location>
</feature>
<feature type="binding site" evidence="1">
    <location>
        <position position="116"/>
    </location>
    <ligand>
        <name>Fe cation</name>
        <dbReference type="ChEBI" id="CHEBI:24875"/>
    </ligand>
</feature>
<feature type="binding site" evidence="1">
    <location>
        <position position="120"/>
    </location>
    <ligand>
        <name>Fe cation</name>
        <dbReference type="ChEBI" id="CHEBI:24875"/>
    </ligand>
</feature>
<feature type="binding site" evidence="1">
    <location>
        <begin position="138"/>
        <end position="142"/>
    </location>
    <ligand>
        <name>substrate</name>
    </ligand>
</feature>
<feature type="binding site" evidence="1">
    <location>
        <position position="171"/>
    </location>
    <ligand>
        <name>substrate</name>
    </ligand>
</feature>
<feature type="binding site" evidence="1">
    <location>
        <position position="184"/>
    </location>
    <ligand>
        <name>substrate</name>
    </ligand>
</feature>
<feature type="binding site" evidence="1">
    <location>
        <position position="188"/>
    </location>
    <ligand>
        <name>substrate</name>
    </ligand>
</feature>
<feature type="binding site" evidence="1">
    <location>
        <position position="277"/>
    </location>
    <ligand>
        <name>substrate</name>
    </ligand>
</feature>
<feature type="binding site" evidence="1">
    <location>
        <position position="309"/>
    </location>
    <ligand>
        <name>Fe cation</name>
        <dbReference type="ChEBI" id="CHEBI:24875"/>
    </ligand>
</feature>
<organism>
    <name type="scientific">Lactobacillus gasseri (strain ATCC 33323 / DSM 20243 / BCRC 14619 / CIP 102991 / JCM 1131 / KCTC 3163 / NCIMB 11718 / NCTC 13722 / AM63)</name>
    <dbReference type="NCBI Taxonomy" id="324831"/>
    <lineage>
        <taxon>Bacteria</taxon>
        <taxon>Bacillati</taxon>
        <taxon>Bacillota</taxon>
        <taxon>Bacilli</taxon>
        <taxon>Lactobacillales</taxon>
        <taxon>Lactobacillaceae</taxon>
        <taxon>Lactobacillus</taxon>
    </lineage>
</organism>
<gene>
    <name evidence="1" type="primary">tsaD</name>
    <name type="synonym">gcp</name>
    <name type="ordered locus">LGAS_0381</name>
</gene>
<protein>
    <recommendedName>
        <fullName evidence="1">tRNA N6-adenosine threonylcarbamoyltransferase</fullName>
        <ecNumber evidence="1">2.3.1.234</ecNumber>
    </recommendedName>
    <alternativeName>
        <fullName evidence="1">N6-L-threonylcarbamoyladenine synthase</fullName>
        <shortName evidence="1">t(6)A synthase</shortName>
    </alternativeName>
    <alternativeName>
        <fullName evidence="1">t(6)A37 threonylcarbamoyladenosine biosynthesis protein TsaD</fullName>
    </alternativeName>
    <alternativeName>
        <fullName evidence="1">tRNA threonylcarbamoyladenosine biosynthesis protein TsaD</fullName>
    </alternativeName>
</protein>